<comment type="function">
    <text evidence="1">Exhibits a very high intrinsic GTPase hydrolysis rate. Involved in the addition of a carboxymethylaminomethyl (cmnm) group at the wobble position (U34) of certain tRNAs, forming tRNA-cmnm(5)s(2)U34.</text>
</comment>
<comment type="cofactor">
    <cofactor evidence="1">
        <name>K(+)</name>
        <dbReference type="ChEBI" id="CHEBI:29103"/>
    </cofactor>
    <text evidence="1">Binds 1 potassium ion per subunit.</text>
</comment>
<comment type="subunit">
    <text evidence="1">Homodimer. Heterotetramer of two MnmE and two MnmG subunits.</text>
</comment>
<comment type="subcellular location">
    <subcellularLocation>
        <location evidence="1">Cytoplasm</location>
    </subcellularLocation>
</comment>
<comment type="similarity">
    <text evidence="1">Belongs to the TRAFAC class TrmE-Era-EngA-EngB-Septin-like GTPase superfamily. TrmE GTPase family.</text>
</comment>
<reference key="1">
    <citation type="journal article" date="2008" name="J. Bacteriol.">
        <title>Complete genome sequence of the mosquitocidal bacterium Bacillus sphaericus C3-41 and comparison with those of closely related Bacillus species.</title>
        <authorList>
            <person name="Hu X."/>
            <person name="Fan W."/>
            <person name="Han B."/>
            <person name="Liu H."/>
            <person name="Zheng D."/>
            <person name="Li Q."/>
            <person name="Dong W."/>
            <person name="Yan J."/>
            <person name="Gao M."/>
            <person name="Berry C."/>
            <person name="Yuan Z."/>
        </authorList>
    </citation>
    <scope>NUCLEOTIDE SEQUENCE [LARGE SCALE GENOMIC DNA]</scope>
    <source>
        <strain>C3-41</strain>
    </source>
</reference>
<keyword id="KW-0963">Cytoplasm</keyword>
<keyword id="KW-0342">GTP-binding</keyword>
<keyword id="KW-0378">Hydrolase</keyword>
<keyword id="KW-0460">Magnesium</keyword>
<keyword id="KW-0479">Metal-binding</keyword>
<keyword id="KW-0547">Nucleotide-binding</keyword>
<keyword id="KW-0630">Potassium</keyword>
<keyword id="KW-0819">tRNA processing</keyword>
<protein>
    <recommendedName>
        <fullName evidence="1">tRNA modification GTPase MnmE</fullName>
        <ecNumber evidence="1">3.6.-.-</ecNumber>
    </recommendedName>
</protein>
<gene>
    <name evidence="1" type="primary">mnmE</name>
    <name evidence="1" type="synonym">trmE</name>
    <name type="ordered locus">Bsph_4781</name>
</gene>
<dbReference type="EC" id="3.6.-.-" evidence="1"/>
<dbReference type="EMBL" id="CP000817">
    <property type="protein sequence ID" value="ACA42225.1"/>
    <property type="molecule type" value="Genomic_DNA"/>
</dbReference>
<dbReference type="RefSeq" id="WP_012296223.1">
    <property type="nucleotide sequence ID" value="NC_010382.1"/>
</dbReference>
<dbReference type="SMR" id="B1HPM3"/>
<dbReference type="EnsemblBacteria" id="ACA42225">
    <property type="protein sequence ID" value="ACA42225"/>
    <property type="gene ID" value="Bsph_4781"/>
</dbReference>
<dbReference type="KEGG" id="lsp:Bsph_4781"/>
<dbReference type="HOGENOM" id="CLU_019624_4_1_9"/>
<dbReference type="Proteomes" id="UP000002164">
    <property type="component" value="Chromosome"/>
</dbReference>
<dbReference type="GO" id="GO:0005829">
    <property type="term" value="C:cytosol"/>
    <property type="evidence" value="ECO:0007669"/>
    <property type="project" value="TreeGrafter"/>
</dbReference>
<dbReference type="GO" id="GO:0005525">
    <property type="term" value="F:GTP binding"/>
    <property type="evidence" value="ECO:0007669"/>
    <property type="project" value="UniProtKB-UniRule"/>
</dbReference>
<dbReference type="GO" id="GO:0003924">
    <property type="term" value="F:GTPase activity"/>
    <property type="evidence" value="ECO:0007669"/>
    <property type="project" value="UniProtKB-UniRule"/>
</dbReference>
<dbReference type="GO" id="GO:0046872">
    <property type="term" value="F:metal ion binding"/>
    <property type="evidence" value="ECO:0007669"/>
    <property type="project" value="UniProtKB-KW"/>
</dbReference>
<dbReference type="GO" id="GO:0030488">
    <property type="term" value="P:tRNA methylation"/>
    <property type="evidence" value="ECO:0007669"/>
    <property type="project" value="TreeGrafter"/>
</dbReference>
<dbReference type="GO" id="GO:0002098">
    <property type="term" value="P:tRNA wobble uridine modification"/>
    <property type="evidence" value="ECO:0007669"/>
    <property type="project" value="TreeGrafter"/>
</dbReference>
<dbReference type="CDD" id="cd04164">
    <property type="entry name" value="trmE"/>
    <property type="match status" value="1"/>
</dbReference>
<dbReference type="CDD" id="cd14858">
    <property type="entry name" value="TrmE_N"/>
    <property type="match status" value="1"/>
</dbReference>
<dbReference type="FunFam" id="3.30.1360.120:FF:000003">
    <property type="entry name" value="tRNA modification GTPase MnmE"/>
    <property type="match status" value="1"/>
</dbReference>
<dbReference type="FunFam" id="3.40.50.300:FF:000494">
    <property type="entry name" value="tRNA modification GTPase MnmE"/>
    <property type="match status" value="1"/>
</dbReference>
<dbReference type="Gene3D" id="3.40.50.300">
    <property type="entry name" value="P-loop containing nucleotide triphosphate hydrolases"/>
    <property type="match status" value="1"/>
</dbReference>
<dbReference type="Gene3D" id="3.30.1360.120">
    <property type="entry name" value="Probable tRNA modification gtpase trme, domain 1"/>
    <property type="match status" value="1"/>
</dbReference>
<dbReference type="Gene3D" id="1.20.120.430">
    <property type="entry name" value="tRNA modification GTPase MnmE domain 2"/>
    <property type="match status" value="1"/>
</dbReference>
<dbReference type="HAMAP" id="MF_00379">
    <property type="entry name" value="GTPase_MnmE"/>
    <property type="match status" value="1"/>
</dbReference>
<dbReference type="InterPro" id="IPR031168">
    <property type="entry name" value="G_TrmE"/>
</dbReference>
<dbReference type="InterPro" id="IPR006073">
    <property type="entry name" value="GTP-bd"/>
</dbReference>
<dbReference type="InterPro" id="IPR018948">
    <property type="entry name" value="GTP-bd_TrmE_N"/>
</dbReference>
<dbReference type="InterPro" id="IPR004520">
    <property type="entry name" value="GTPase_MnmE"/>
</dbReference>
<dbReference type="InterPro" id="IPR027368">
    <property type="entry name" value="MnmE_dom2"/>
</dbReference>
<dbReference type="InterPro" id="IPR025867">
    <property type="entry name" value="MnmE_helical"/>
</dbReference>
<dbReference type="InterPro" id="IPR027417">
    <property type="entry name" value="P-loop_NTPase"/>
</dbReference>
<dbReference type="InterPro" id="IPR005225">
    <property type="entry name" value="Small_GTP-bd"/>
</dbReference>
<dbReference type="InterPro" id="IPR027266">
    <property type="entry name" value="TrmE/GcvT_dom1"/>
</dbReference>
<dbReference type="NCBIfam" id="TIGR00450">
    <property type="entry name" value="mnmE_trmE_thdF"/>
    <property type="match status" value="1"/>
</dbReference>
<dbReference type="NCBIfam" id="TIGR00231">
    <property type="entry name" value="small_GTP"/>
    <property type="match status" value="1"/>
</dbReference>
<dbReference type="PANTHER" id="PTHR42714">
    <property type="entry name" value="TRNA MODIFICATION GTPASE GTPBP3"/>
    <property type="match status" value="1"/>
</dbReference>
<dbReference type="PANTHER" id="PTHR42714:SF2">
    <property type="entry name" value="TRNA MODIFICATION GTPASE GTPBP3, MITOCHONDRIAL"/>
    <property type="match status" value="1"/>
</dbReference>
<dbReference type="Pfam" id="PF01926">
    <property type="entry name" value="MMR_HSR1"/>
    <property type="match status" value="1"/>
</dbReference>
<dbReference type="Pfam" id="PF12631">
    <property type="entry name" value="MnmE_helical"/>
    <property type="match status" value="1"/>
</dbReference>
<dbReference type="Pfam" id="PF10396">
    <property type="entry name" value="TrmE_N"/>
    <property type="match status" value="1"/>
</dbReference>
<dbReference type="PRINTS" id="PR00449">
    <property type="entry name" value="RASTRNSFRMNG"/>
</dbReference>
<dbReference type="SUPFAM" id="SSF52540">
    <property type="entry name" value="P-loop containing nucleoside triphosphate hydrolases"/>
    <property type="match status" value="1"/>
</dbReference>
<dbReference type="SUPFAM" id="SSF116878">
    <property type="entry name" value="TrmE connector domain"/>
    <property type="match status" value="1"/>
</dbReference>
<dbReference type="PROSITE" id="PS51709">
    <property type="entry name" value="G_TRME"/>
    <property type="match status" value="1"/>
</dbReference>
<name>MNME_LYSSC</name>
<accession>B1HPM3</accession>
<evidence type="ECO:0000255" key="1">
    <source>
        <dbReference type="HAMAP-Rule" id="MF_00379"/>
    </source>
</evidence>
<organism>
    <name type="scientific">Lysinibacillus sphaericus (strain C3-41)</name>
    <dbReference type="NCBI Taxonomy" id="444177"/>
    <lineage>
        <taxon>Bacteria</taxon>
        <taxon>Bacillati</taxon>
        <taxon>Bacillota</taxon>
        <taxon>Bacilli</taxon>
        <taxon>Bacillales</taxon>
        <taxon>Bacillaceae</taxon>
        <taxon>Lysinibacillus</taxon>
    </lineage>
</organism>
<feature type="chain" id="PRO_0000345823" description="tRNA modification GTPase MnmE">
    <location>
        <begin position="1"/>
        <end position="461"/>
    </location>
</feature>
<feature type="domain" description="TrmE-type G">
    <location>
        <begin position="223"/>
        <end position="382"/>
    </location>
</feature>
<feature type="binding site" evidence="1">
    <location>
        <position position="22"/>
    </location>
    <ligand>
        <name>(6S)-5-formyl-5,6,7,8-tetrahydrofolate</name>
        <dbReference type="ChEBI" id="CHEBI:57457"/>
    </ligand>
</feature>
<feature type="binding site" evidence="1">
    <location>
        <position position="87"/>
    </location>
    <ligand>
        <name>(6S)-5-formyl-5,6,7,8-tetrahydrofolate</name>
        <dbReference type="ChEBI" id="CHEBI:57457"/>
    </ligand>
</feature>
<feature type="binding site" evidence="1">
    <location>
        <position position="126"/>
    </location>
    <ligand>
        <name>(6S)-5-formyl-5,6,7,8-tetrahydrofolate</name>
        <dbReference type="ChEBI" id="CHEBI:57457"/>
    </ligand>
</feature>
<feature type="binding site" evidence="1">
    <location>
        <begin position="233"/>
        <end position="238"/>
    </location>
    <ligand>
        <name>GTP</name>
        <dbReference type="ChEBI" id="CHEBI:37565"/>
    </ligand>
</feature>
<feature type="binding site" evidence="1">
    <location>
        <position position="233"/>
    </location>
    <ligand>
        <name>K(+)</name>
        <dbReference type="ChEBI" id="CHEBI:29103"/>
    </ligand>
</feature>
<feature type="binding site" evidence="1">
    <location>
        <position position="237"/>
    </location>
    <ligand>
        <name>Mg(2+)</name>
        <dbReference type="ChEBI" id="CHEBI:18420"/>
    </ligand>
</feature>
<feature type="binding site" evidence="1">
    <location>
        <begin position="252"/>
        <end position="258"/>
    </location>
    <ligand>
        <name>GTP</name>
        <dbReference type="ChEBI" id="CHEBI:37565"/>
    </ligand>
</feature>
<feature type="binding site" evidence="1">
    <location>
        <position position="252"/>
    </location>
    <ligand>
        <name>K(+)</name>
        <dbReference type="ChEBI" id="CHEBI:29103"/>
    </ligand>
</feature>
<feature type="binding site" evidence="1">
    <location>
        <position position="254"/>
    </location>
    <ligand>
        <name>K(+)</name>
        <dbReference type="ChEBI" id="CHEBI:29103"/>
    </ligand>
</feature>
<feature type="binding site" evidence="1">
    <location>
        <position position="257"/>
    </location>
    <ligand>
        <name>K(+)</name>
        <dbReference type="ChEBI" id="CHEBI:29103"/>
    </ligand>
</feature>
<feature type="binding site" evidence="1">
    <location>
        <position position="258"/>
    </location>
    <ligand>
        <name>Mg(2+)</name>
        <dbReference type="ChEBI" id="CHEBI:18420"/>
    </ligand>
</feature>
<feature type="binding site" evidence="1">
    <location>
        <begin position="277"/>
        <end position="280"/>
    </location>
    <ligand>
        <name>GTP</name>
        <dbReference type="ChEBI" id="CHEBI:37565"/>
    </ligand>
</feature>
<feature type="binding site" evidence="1">
    <location>
        <position position="461"/>
    </location>
    <ligand>
        <name>(6S)-5-formyl-5,6,7,8-tetrahydrofolate</name>
        <dbReference type="ChEBI" id="CHEBI:57457"/>
    </ligand>
</feature>
<proteinExistence type="inferred from homology"/>
<sequence length="461" mass="50669">MEFDTIAAISTPMGEGAIAIVRLSGDEAVAIADKIFKSPGGKSLTTKDSHTIHYGHLVDPKTNEVVEEVMLSLMRGPKTFTREDVVEINCHGGLVSVNRVLQLALTNGARLAEPGEFTKRAFLNGRIDLSQAEAVMDLIRAKTDRAMNVALGQMDGKLSRLIGDLRQALLETLAQVEVNIDYPEYDDVEEMTVPVLVEKCTWVRDEIIKLLQTSSQGKILREGLSTVILGRPNVGKSSLLNSLVQENKAIVTDIAGTTRDIIEEYVNVRGVPLRLVDTAGIRETEDIVERIGVERSREALRGADLILFVLNYADELTAEDERLFETIEAMDYIVIINKTDLPQKINLARVKELAGKHRIVTTSLLQEEGVTELEEAIAALFFEGQIEAGDLTYVSNARHIALLHQAQATVEDAIAAAQAGVPVDMVQIDVTRTWELLGEIIGDTVQESLINQLFSQFCLGK</sequence>